<reference key="1">
    <citation type="journal article" date="2000" name="Science">
        <title>The genome sequence of Drosophila melanogaster.</title>
        <authorList>
            <person name="Adams M.D."/>
            <person name="Celniker S.E."/>
            <person name="Holt R.A."/>
            <person name="Evans C.A."/>
            <person name="Gocayne J.D."/>
            <person name="Amanatides P.G."/>
            <person name="Scherer S.E."/>
            <person name="Li P.W."/>
            <person name="Hoskins R.A."/>
            <person name="Galle R.F."/>
            <person name="George R.A."/>
            <person name="Lewis S.E."/>
            <person name="Richards S."/>
            <person name="Ashburner M."/>
            <person name="Henderson S.N."/>
            <person name="Sutton G.G."/>
            <person name="Wortman J.R."/>
            <person name="Yandell M.D."/>
            <person name="Zhang Q."/>
            <person name="Chen L.X."/>
            <person name="Brandon R.C."/>
            <person name="Rogers Y.-H.C."/>
            <person name="Blazej R.G."/>
            <person name="Champe M."/>
            <person name="Pfeiffer B.D."/>
            <person name="Wan K.H."/>
            <person name="Doyle C."/>
            <person name="Baxter E.G."/>
            <person name="Helt G."/>
            <person name="Nelson C.R."/>
            <person name="Miklos G.L.G."/>
            <person name="Abril J.F."/>
            <person name="Agbayani A."/>
            <person name="An H.-J."/>
            <person name="Andrews-Pfannkoch C."/>
            <person name="Baldwin D."/>
            <person name="Ballew R.M."/>
            <person name="Basu A."/>
            <person name="Baxendale J."/>
            <person name="Bayraktaroglu L."/>
            <person name="Beasley E.M."/>
            <person name="Beeson K.Y."/>
            <person name="Benos P.V."/>
            <person name="Berman B.P."/>
            <person name="Bhandari D."/>
            <person name="Bolshakov S."/>
            <person name="Borkova D."/>
            <person name="Botchan M.R."/>
            <person name="Bouck J."/>
            <person name="Brokstein P."/>
            <person name="Brottier P."/>
            <person name="Burtis K.C."/>
            <person name="Busam D.A."/>
            <person name="Butler H."/>
            <person name="Cadieu E."/>
            <person name="Center A."/>
            <person name="Chandra I."/>
            <person name="Cherry J.M."/>
            <person name="Cawley S."/>
            <person name="Dahlke C."/>
            <person name="Davenport L.B."/>
            <person name="Davies P."/>
            <person name="de Pablos B."/>
            <person name="Delcher A."/>
            <person name="Deng Z."/>
            <person name="Mays A.D."/>
            <person name="Dew I."/>
            <person name="Dietz S.M."/>
            <person name="Dodson K."/>
            <person name="Doup L.E."/>
            <person name="Downes M."/>
            <person name="Dugan-Rocha S."/>
            <person name="Dunkov B.C."/>
            <person name="Dunn P."/>
            <person name="Durbin K.J."/>
            <person name="Evangelista C.C."/>
            <person name="Ferraz C."/>
            <person name="Ferriera S."/>
            <person name="Fleischmann W."/>
            <person name="Fosler C."/>
            <person name="Gabrielian A.E."/>
            <person name="Garg N.S."/>
            <person name="Gelbart W.M."/>
            <person name="Glasser K."/>
            <person name="Glodek A."/>
            <person name="Gong F."/>
            <person name="Gorrell J.H."/>
            <person name="Gu Z."/>
            <person name="Guan P."/>
            <person name="Harris M."/>
            <person name="Harris N.L."/>
            <person name="Harvey D.A."/>
            <person name="Heiman T.J."/>
            <person name="Hernandez J.R."/>
            <person name="Houck J."/>
            <person name="Hostin D."/>
            <person name="Houston K.A."/>
            <person name="Howland T.J."/>
            <person name="Wei M.-H."/>
            <person name="Ibegwam C."/>
            <person name="Jalali M."/>
            <person name="Kalush F."/>
            <person name="Karpen G.H."/>
            <person name="Ke Z."/>
            <person name="Kennison J.A."/>
            <person name="Ketchum K.A."/>
            <person name="Kimmel B.E."/>
            <person name="Kodira C.D."/>
            <person name="Kraft C.L."/>
            <person name="Kravitz S."/>
            <person name="Kulp D."/>
            <person name="Lai Z."/>
            <person name="Lasko P."/>
            <person name="Lei Y."/>
            <person name="Levitsky A.A."/>
            <person name="Li J.H."/>
            <person name="Li Z."/>
            <person name="Liang Y."/>
            <person name="Lin X."/>
            <person name="Liu X."/>
            <person name="Mattei B."/>
            <person name="McIntosh T.C."/>
            <person name="McLeod M.P."/>
            <person name="McPherson D."/>
            <person name="Merkulov G."/>
            <person name="Milshina N.V."/>
            <person name="Mobarry C."/>
            <person name="Morris J."/>
            <person name="Moshrefi A."/>
            <person name="Mount S.M."/>
            <person name="Moy M."/>
            <person name="Murphy B."/>
            <person name="Murphy L."/>
            <person name="Muzny D.M."/>
            <person name="Nelson D.L."/>
            <person name="Nelson D.R."/>
            <person name="Nelson K.A."/>
            <person name="Nixon K."/>
            <person name="Nusskern D.R."/>
            <person name="Pacleb J.M."/>
            <person name="Palazzolo M."/>
            <person name="Pittman G.S."/>
            <person name="Pan S."/>
            <person name="Pollard J."/>
            <person name="Puri V."/>
            <person name="Reese M.G."/>
            <person name="Reinert K."/>
            <person name="Remington K."/>
            <person name="Saunders R.D.C."/>
            <person name="Scheeler F."/>
            <person name="Shen H."/>
            <person name="Shue B.C."/>
            <person name="Siden-Kiamos I."/>
            <person name="Simpson M."/>
            <person name="Skupski M.P."/>
            <person name="Smith T.J."/>
            <person name="Spier E."/>
            <person name="Spradling A.C."/>
            <person name="Stapleton M."/>
            <person name="Strong R."/>
            <person name="Sun E."/>
            <person name="Svirskas R."/>
            <person name="Tector C."/>
            <person name="Turner R."/>
            <person name="Venter E."/>
            <person name="Wang A.H."/>
            <person name="Wang X."/>
            <person name="Wang Z.-Y."/>
            <person name="Wassarman D.A."/>
            <person name="Weinstock G.M."/>
            <person name="Weissenbach J."/>
            <person name="Williams S.M."/>
            <person name="Woodage T."/>
            <person name="Worley K.C."/>
            <person name="Wu D."/>
            <person name="Yang S."/>
            <person name="Yao Q.A."/>
            <person name="Ye J."/>
            <person name="Yeh R.-F."/>
            <person name="Zaveri J.S."/>
            <person name="Zhan M."/>
            <person name="Zhang G."/>
            <person name="Zhao Q."/>
            <person name="Zheng L."/>
            <person name="Zheng X.H."/>
            <person name="Zhong F.N."/>
            <person name="Zhong W."/>
            <person name="Zhou X."/>
            <person name="Zhu S.C."/>
            <person name="Zhu X."/>
            <person name="Smith H.O."/>
            <person name="Gibbs R.A."/>
            <person name="Myers E.W."/>
            <person name="Rubin G.M."/>
            <person name="Venter J.C."/>
        </authorList>
    </citation>
    <scope>NUCLEOTIDE SEQUENCE [LARGE SCALE GENOMIC DNA]</scope>
    <source>
        <strain>Berkeley</strain>
    </source>
</reference>
<reference key="2">
    <citation type="journal article" date="2002" name="Genome Biol.">
        <title>Annotation of the Drosophila melanogaster euchromatic genome: a systematic review.</title>
        <authorList>
            <person name="Misra S."/>
            <person name="Crosby M.A."/>
            <person name="Mungall C.J."/>
            <person name="Matthews B.B."/>
            <person name="Campbell K.S."/>
            <person name="Hradecky P."/>
            <person name="Huang Y."/>
            <person name="Kaminker J.S."/>
            <person name="Millburn G.H."/>
            <person name="Prochnik S.E."/>
            <person name="Smith C.D."/>
            <person name="Tupy J.L."/>
            <person name="Whitfield E.J."/>
            <person name="Bayraktaroglu L."/>
            <person name="Berman B.P."/>
            <person name="Bettencourt B.R."/>
            <person name="Celniker S.E."/>
            <person name="de Grey A.D.N.J."/>
            <person name="Drysdale R.A."/>
            <person name="Harris N.L."/>
            <person name="Richter J."/>
            <person name="Russo S."/>
            <person name="Schroeder A.J."/>
            <person name="Shu S.Q."/>
            <person name="Stapleton M."/>
            <person name="Yamada C."/>
            <person name="Ashburner M."/>
            <person name="Gelbart W.M."/>
            <person name="Rubin G.M."/>
            <person name="Lewis S.E."/>
        </authorList>
    </citation>
    <scope>GENOME REANNOTATION</scope>
    <source>
        <strain>Berkeley</strain>
    </source>
</reference>
<reference key="3">
    <citation type="journal article" date="2002" name="Genome Biol.">
        <title>A Drosophila full-length cDNA resource.</title>
        <authorList>
            <person name="Stapleton M."/>
            <person name="Carlson J.W."/>
            <person name="Brokstein P."/>
            <person name="Yu C."/>
            <person name="Champe M."/>
            <person name="George R.A."/>
            <person name="Guarin H."/>
            <person name="Kronmiller B."/>
            <person name="Pacleb J.M."/>
            <person name="Park S."/>
            <person name="Wan K.H."/>
            <person name="Rubin G.M."/>
            <person name="Celniker S.E."/>
        </authorList>
    </citation>
    <scope>NUCLEOTIDE SEQUENCE [LARGE SCALE MRNA]</scope>
    <source>
        <strain>Berkeley</strain>
        <tissue>Ovary</tissue>
    </source>
</reference>
<reference key="4">
    <citation type="journal article" date="2014" name="Proc. Natl. Acad. Sci. U.S.A.">
        <title>Sudestada1, a Drosophila ribosomal prolyl-hydroxylase required for mRNA translation, cell homeostasis, and organ growth.</title>
        <authorList>
            <person name="Katz M.J."/>
            <person name="Acevedo J.M."/>
            <person name="Loenarz C."/>
            <person name="Galagovsky D."/>
            <person name="Liu-Yi P."/>
            <person name="Perez-Pepe M."/>
            <person name="Thalhammer A."/>
            <person name="Sekirnik R."/>
            <person name="Ge W."/>
            <person name="Melani M."/>
            <person name="Thomas M.G."/>
            <person name="Simonetta S."/>
            <person name="Boccaccio G.L."/>
            <person name="Schofield C.J."/>
            <person name="Cockman M.E."/>
            <person name="Ratcliffe P.J."/>
            <person name="Wappner P."/>
        </authorList>
    </citation>
    <scope>HYDROXYLATION AT PRO-62</scope>
</reference>
<reference key="5">
    <citation type="journal article" date="2013" name="Nature">
        <title>Structures of the human and Drosophila 80S ribosome.</title>
        <authorList>
            <person name="Anger A.M."/>
            <person name="Armache J.P."/>
            <person name="Berninghausen O."/>
            <person name="Habeck M."/>
            <person name="Subklewe M."/>
            <person name="Wilson D.N."/>
            <person name="Beckmann R."/>
        </authorList>
    </citation>
    <scope>STRUCTURE BY ELECTRON MICROSCOPY (6.0 ANGSTROMS) OF THE 80S RIBOSOME</scope>
    <scope>SUBCELLULAR LOCATION</scope>
    <scope>SUBUNIT</scope>
</reference>
<proteinExistence type="evidence at protein level"/>
<feature type="chain" id="PRO_0000146465" description="Small ribosomal subunit protein uS12">
    <location>
        <begin position="1"/>
        <end position="143"/>
    </location>
</feature>
<feature type="region of interest" description="Disordered" evidence="3">
    <location>
        <begin position="1"/>
        <end position="23"/>
    </location>
</feature>
<feature type="compositionally biased region" description="Basic residues" evidence="3">
    <location>
        <begin position="1"/>
        <end position="19"/>
    </location>
</feature>
<feature type="modified residue" description="3-hydroxyproline" evidence="5">
    <location>
        <position position="62"/>
    </location>
</feature>
<accession>Q8T3U2</accession>
<accession>Q9V6Z0</accession>
<organism>
    <name type="scientific">Drosophila melanogaster</name>
    <name type="common">Fruit fly</name>
    <dbReference type="NCBI Taxonomy" id="7227"/>
    <lineage>
        <taxon>Eukaryota</taxon>
        <taxon>Metazoa</taxon>
        <taxon>Ecdysozoa</taxon>
        <taxon>Arthropoda</taxon>
        <taxon>Hexapoda</taxon>
        <taxon>Insecta</taxon>
        <taxon>Pterygota</taxon>
        <taxon>Neoptera</taxon>
        <taxon>Endopterygota</taxon>
        <taxon>Diptera</taxon>
        <taxon>Brachycera</taxon>
        <taxon>Muscomorpha</taxon>
        <taxon>Ephydroidea</taxon>
        <taxon>Drosophilidae</taxon>
        <taxon>Drosophila</taxon>
        <taxon>Sophophora</taxon>
    </lineage>
</organism>
<comment type="subunit">
    <text evidence="4">Component of the 40S small ribosomal subunit.</text>
</comment>
<comment type="subcellular location">
    <subcellularLocation>
        <location evidence="1">Cytoplasm</location>
        <location evidence="1">Cytosol</location>
    </subcellularLocation>
    <subcellularLocation>
        <location evidence="7">Cytoplasm</location>
    </subcellularLocation>
    <subcellularLocation>
        <location evidence="2">Rough endoplasmic reticulum</location>
    </subcellularLocation>
    <text evidence="1 2">Detected on cytosolic polysomes (By similarity). Detected in ribosomes that are associated with the rough endoplasmic reticulum (By similarity).</text>
</comment>
<comment type="PTM">
    <text evidence="8">Hydroxylation at Pro-62 affects translation termination efficiency.</text>
</comment>
<comment type="similarity">
    <text evidence="6">Belongs to the universal ribosomal protein uS12 family.</text>
</comment>
<evidence type="ECO:0000250" key="1">
    <source>
        <dbReference type="UniProtKB" id="P62266"/>
    </source>
</evidence>
<evidence type="ECO:0000250" key="2">
    <source>
        <dbReference type="UniProtKB" id="Q6SA96"/>
    </source>
</evidence>
<evidence type="ECO:0000256" key="3">
    <source>
        <dbReference type="SAM" id="MobiDB-lite"/>
    </source>
</evidence>
<evidence type="ECO:0000269" key="4">
    <source>
    </source>
</evidence>
<evidence type="ECO:0000269" key="5">
    <source>
    </source>
</evidence>
<evidence type="ECO:0000305" key="6"/>
<evidence type="ECO:0000305" key="7">
    <source>
    </source>
</evidence>
<evidence type="ECO:0000305" key="8">
    <source>
    </source>
</evidence>
<sequence>MGKPRGLRTARKHVNHRRDQRWADKDYKKAHLGTRWKANPFGGASHAKGIVLEKVGVEAKQPNSAIRKCVRVQLIKNGKKITAFVPRDGSLNYIEENDEVLVAGFGRKGHAVGDIPGVRFKVVKVANVSLLALYKEKKERPRS</sequence>
<dbReference type="EMBL" id="AE013599">
    <property type="protein sequence ID" value="AAF58277.2"/>
    <property type="molecule type" value="Genomic_DNA"/>
</dbReference>
<dbReference type="EMBL" id="AY089523">
    <property type="protein sequence ID" value="AAL90261.1"/>
    <property type="molecule type" value="mRNA"/>
</dbReference>
<dbReference type="RefSeq" id="NP_001286410.1">
    <property type="nucleotide sequence ID" value="NM_001299481.1"/>
</dbReference>
<dbReference type="RefSeq" id="NP_610939.2">
    <property type="nucleotide sequence ID" value="NM_137095.3"/>
</dbReference>
<dbReference type="PDB" id="4V6W">
    <property type="method" value="EM"/>
    <property type="resolution" value="6.00 A"/>
    <property type="chains" value="AX=1-143"/>
</dbReference>
<dbReference type="PDB" id="6XU6">
    <property type="method" value="EM"/>
    <property type="resolution" value="3.50 A"/>
    <property type="chains" value="AX=1-143"/>
</dbReference>
<dbReference type="PDB" id="6XU7">
    <property type="method" value="EM"/>
    <property type="resolution" value="4.90 A"/>
    <property type="chains" value="AX=1-143"/>
</dbReference>
<dbReference type="PDB" id="6XU8">
    <property type="method" value="EM"/>
    <property type="resolution" value="3.00 A"/>
    <property type="chains" value="AX=1-143"/>
</dbReference>
<dbReference type="PDBsum" id="4V6W"/>
<dbReference type="PDBsum" id="6XU6"/>
<dbReference type="PDBsum" id="6XU7"/>
<dbReference type="PDBsum" id="6XU8"/>
<dbReference type="EMDB" id="EMD-10622"/>
<dbReference type="EMDB" id="EMD-10623"/>
<dbReference type="EMDB" id="EMD-10624"/>
<dbReference type="SMR" id="Q8T3U2"/>
<dbReference type="BioGRID" id="62326">
    <property type="interactions" value="116"/>
</dbReference>
<dbReference type="FunCoup" id="Q8T3U2">
    <property type="interactions" value="1411"/>
</dbReference>
<dbReference type="IntAct" id="Q8T3U2">
    <property type="interactions" value="8"/>
</dbReference>
<dbReference type="MINT" id="Q8T3U2"/>
<dbReference type="STRING" id="7227.FBpp0086701"/>
<dbReference type="PaxDb" id="7227-FBpp0086701"/>
<dbReference type="DNASU" id="36576"/>
<dbReference type="EnsemblMetazoa" id="FBtr0087575">
    <property type="protein sequence ID" value="FBpp0086701"/>
    <property type="gene ID" value="FBgn0033912"/>
</dbReference>
<dbReference type="EnsemblMetazoa" id="FBtr0339970">
    <property type="protein sequence ID" value="FBpp0308991"/>
    <property type="gene ID" value="FBgn0033912"/>
</dbReference>
<dbReference type="GeneID" id="36576"/>
<dbReference type="KEGG" id="dme:Dmel_CG8415"/>
<dbReference type="AGR" id="FB:FBgn0033912"/>
<dbReference type="CTD" id="6228"/>
<dbReference type="FlyBase" id="FBgn0033912">
    <property type="gene designation" value="RpS23"/>
</dbReference>
<dbReference type="VEuPathDB" id="VectorBase:FBgn0033912"/>
<dbReference type="eggNOG" id="KOG1749">
    <property type="taxonomic scope" value="Eukaryota"/>
</dbReference>
<dbReference type="GeneTree" id="ENSGT00550000074784"/>
<dbReference type="HOGENOM" id="CLU_115574_0_1_1"/>
<dbReference type="InParanoid" id="Q8T3U2"/>
<dbReference type="OMA" id="KFRWSQR"/>
<dbReference type="OrthoDB" id="1713912at2759"/>
<dbReference type="PhylomeDB" id="Q8T3U2"/>
<dbReference type="Reactome" id="R-DME-156827">
    <property type="pathway name" value="L13a-mediated translational silencing of Ceruloplasmin expression"/>
</dbReference>
<dbReference type="Reactome" id="R-DME-1799339">
    <property type="pathway name" value="SRP-dependent cotranslational protein targeting to membrane"/>
</dbReference>
<dbReference type="Reactome" id="R-DME-72649">
    <property type="pathway name" value="Translation initiation complex formation"/>
</dbReference>
<dbReference type="Reactome" id="R-DME-72689">
    <property type="pathway name" value="Formation of a pool of free 40S subunits"/>
</dbReference>
<dbReference type="Reactome" id="R-DME-72695">
    <property type="pathway name" value="Formation of the ternary complex, and subsequently, the 43S complex"/>
</dbReference>
<dbReference type="Reactome" id="R-DME-72702">
    <property type="pathway name" value="Ribosomal scanning and start codon recognition"/>
</dbReference>
<dbReference type="Reactome" id="R-DME-72706">
    <property type="pathway name" value="GTP hydrolysis and joining of the 60S ribosomal subunit"/>
</dbReference>
<dbReference type="Reactome" id="R-DME-9629569">
    <property type="pathway name" value="Protein hydroxylation"/>
</dbReference>
<dbReference type="Reactome" id="R-DME-975956">
    <property type="pathway name" value="Nonsense Mediated Decay (NMD) independent of the Exon Junction Complex (EJC)"/>
</dbReference>
<dbReference type="Reactome" id="R-DME-975957">
    <property type="pathway name" value="Nonsense Mediated Decay (NMD) enhanced by the Exon Junction Complex (EJC)"/>
</dbReference>
<dbReference type="SignaLink" id="Q8T3U2"/>
<dbReference type="BioGRID-ORCS" id="36576">
    <property type="hits" value="1 hit in 1 CRISPR screen"/>
</dbReference>
<dbReference type="GenomeRNAi" id="36576"/>
<dbReference type="PRO" id="PR:Q8T3U2"/>
<dbReference type="Proteomes" id="UP000000803">
    <property type="component" value="Chromosome 2R"/>
</dbReference>
<dbReference type="Bgee" id="FBgn0033912">
    <property type="expression patterns" value="Expressed in intestinal stem cell (Drosophila) in digestive tract and 275 other cell types or tissues"/>
</dbReference>
<dbReference type="ExpressionAtlas" id="Q8T3U2">
    <property type="expression patterns" value="baseline and differential"/>
</dbReference>
<dbReference type="GO" id="GO:0005829">
    <property type="term" value="C:cytosol"/>
    <property type="evidence" value="ECO:0007005"/>
    <property type="project" value="FlyBase"/>
</dbReference>
<dbReference type="GO" id="GO:0022626">
    <property type="term" value="C:cytosolic ribosome"/>
    <property type="evidence" value="ECO:0000314"/>
    <property type="project" value="FlyBase"/>
</dbReference>
<dbReference type="GO" id="GO:0022627">
    <property type="term" value="C:cytosolic small ribosomal subunit"/>
    <property type="evidence" value="ECO:0000314"/>
    <property type="project" value="UniProtKB"/>
</dbReference>
<dbReference type="GO" id="GO:0005840">
    <property type="term" value="C:ribosome"/>
    <property type="evidence" value="ECO:0000318"/>
    <property type="project" value="GO_Central"/>
</dbReference>
<dbReference type="GO" id="GO:0005791">
    <property type="term" value="C:rough endoplasmic reticulum"/>
    <property type="evidence" value="ECO:0007669"/>
    <property type="project" value="UniProtKB-SubCell"/>
</dbReference>
<dbReference type="GO" id="GO:0003735">
    <property type="term" value="F:structural constituent of ribosome"/>
    <property type="evidence" value="ECO:0000314"/>
    <property type="project" value="FlyBase"/>
</dbReference>
<dbReference type="GO" id="GO:0002181">
    <property type="term" value="P:cytoplasmic translation"/>
    <property type="evidence" value="ECO:0000250"/>
    <property type="project" value="UniProtKB"/>
</dbReference>
<dbReference type="GO" id="GO:0006412">
    <property type="term" value="P:translation"/>
    <property type="evidence" value="ECO:0000318"/>
    <property type="project" value="GO_Central"/>
</dbReference>
<dbReference type="CDD" id="cd03367">
    <property type="entry name" value="Ribosomal_S23"/>
    <property type="match status" value="1"/>
</dbReference>
<dbReference type="FunFam" id="2.40.50.140:FF:000007">
    <property type="entry name" value="40S ribosomal protein S23"/>
    <property type="match status" value="1"/>
</dbReference>
<dbReference type="Gene3D" id="2.40.50.140">
    <property type="entry name" value="Nucleic acid-binding proteins"/>
    <property type="match status" value="1"/>
</dbReference>
<dbReference type="InterPro" id="IPR012340">
    <property type="entry name" value="NA-bd_OB-fold"/>
</dbReference>
<dbReference type="InterPro" id="IPR006032">
    <property type="entry name" value="Ribosomal_uS12"/>
</dbReference>
<dbReference type="InterPro" id="IPR005680">
    <property type="entry name" value="Ribosomal_uS12_euk/arc"/>
</dbReference>
<dbReference type="NCBIfam" id="TIGR00982">
    <property type="entry name" value="uS12_E_A"/>
    <property type="match status" value="1"/>
</dbReference>
<dbReference type="PANTHER" id="PTHR11652">
    <property type="entry name" value="30S RIBOSOMAL PROTEIN S12 FAMILY MEMBER"/>
    <property type="match status" value="1"/>
</dbReference>
<dbReference type="Pfam" id="PF00164">
    <property type="entry name" value="Ribosom_S12_S23"/>
    <property type="match status" value="1"/>
</dbReference>
<dbReference type="PIRSF" id="PIRSF002133">
    <property type="entry name" value="Ribosomal_S12/S23"/>
    <property type="match status" value="1"/>
</dbReference>
<dbReference type="SUPFAM" id="SSF50249">
    <property type="entry name" value="Nucleic acid-binding proteins"/>
    <property type="match status" value="1"/>
</dbReference>
<dbReference type="PROSITE" id="PS00055">
    <property type="entry name" value="RIBOSOMAL_S12"/>
    <property type="match status" value="1"/>
</dbReference>
<name>RS23_DROME</name>
<keyword id="KW-0002">3D-structure</keyword>
<keyword id="KW-0963">Cytoplasm</keyword>
<keyword id="KW-0256">Endoplasmic reticulum</keyword>
<keyword id="KW-0379">Hydroxylation</keyword>
<keyword id="KW-1185">Reference proteome</keyword>
<keyword id="KW-0687">Ribonucleoprotein</keyword>
<keyword id="KW-0689">Ribosomal protein</keyword>
<protein>
    <recommendedName>
        <fullName evidence="6">Small ribosomal subunit protein uS12</fullName>
    </recommendedName>
    <alternativeName>
        <fullName>40S ribosomal protein S23</fullName>
    </alternativeName>
</protein>
<gene>
    <name type="primary">RpS23</name>
    <name type="ORF">CG8415</name>
</gene>